<evidence type="ECO:0000255" key="1">
    <source>
        <dbReference type="HAMAP-Rule" id="MF_00051"/>
    </source>
</evidence>
<organism>
    <name type="scientific">Aliivibrio fischeri (strain ATCC 700601 / ES114)</name>
    <name type="common">Vibrio fischeri</name>
    <dbReference type="NCBI Taxonomy" id="312309"/>
    <lineage>
        <taxon>Bacteria</taxon>
        <taxon>Pseudomonadati</taxon>
        <taxon>Pseudomonadota</taxon>
        <taxon>Gammaproteobacteria</taxon>
        <taxon>Vibrionales</taxon>
        <taxon>Vibrionaceae</taxon>
        <taxon>Aliivibrio</taxon>
    </lineage>
</organism>
<sequence length="416" mass="45176">MLKRDMNIADYDADLFAAIQEETVRQEEHIELIASENYTSPRVMEAQGSQLTNKYAEGYPGKRYYGGCEYVDKVETLAIERACELFGAEYANVQPHSGSQANNAVYMALLNAGDTVLGMSLAHGGHLTHGSPVNFSGKLYNIIPYGIDENGQIDYEEMEALAVEHKPKMIIGGFSAYSQVCDWARMREIADKVGAYFFVDMAHVAGLIAAGVYPNPVPHAHVVTTTTHKTLAGPRGGLILSNEGEDLYKKLNSAVFPGGQGGPLMHVIAGKAVAFKEALEPEFKEYQARVVANAKAMVAEFLARGYNIVSGSTENHLFLVDLIDKDITGKEADAALGSANITVNKNSVPNDPRSPFVTSGIRIGSPSITRRGFTEEDAKNLAGWMCDILDNMGDESVIEATKAKVLEICKRLPVYA</sequence>
<dbReference type="EC" id="2.1.2.1" evidence="1"/>
<dbReference type="EMBL" id="CP000020">
    <property type="protein sequence ID" value="AAW85190.1"/>
    <property type="molecule type" value="Genomic_DNA"/>
</dbReference>
<dbReference type="RefSeq" id="WP_005418084.1">
    <property type="nucleotide sequence ID" value="NZ_CAWLES010000001.1"/>
</dbReference>
<dbReference type="RefSeq" id="YP_204078.1">
    <property type="nucleotide sequence ID" value="NC_006840.2"/>
</dbReference>
<dbReference type="SMR" id="Q5E706"/>
<dbReference type="STRING" id="312309.VF_0695"/>
<dbReference type="EnsemblBacteria" id="AAW85190">
    <property type="protein sequence ID" value="AAW85190"/>
    <property type="gene ID" value="VF_0695"/>
</dbReference>
<dbReference type="GeneID" id="54163350"/>
<dbReference type="KEGG" id="vfi:VF_0695"/>
<dbReference type="PATRIC" id="fig|312309.11.peg.689"/>
<dbReference type="eggNOG" id="COG0112">
    <property type="taxonomic scope" value="Bacteria"/>
</dbReference>
<dbReference type="HOGENOM" id="CLU_022477_2_1_6"/>
<dbReference type="OrthoDB" id="9803846at2"/>
<dbReference type="UniPathway" id="UPA00193"/>
<dbReference type="UniPathway" id="UPA00288">
    <property type="reaction ID" value="UER01023"/>
</dbReference>
<dbReference type="Proteomes" id="UP000000537">
    <property type="component" value="Chromosome I"/>
</dbReference>
<dbReference type="GO" id="GO:0005829">
    <property type="term" value="C:cytosol"/>
    <property type="evidence" value="ECO:0007669"/>
    <property type="project" value="TreeGrafter"/>
</dbReference>
<dbReference type="GO" id="GO:0004372">
    <property type="term" value="F:glycine hydroxymethyltransferase activity"/>
    <property type="evidence" value="ECO:0007669"/>
    <property type="project" value="UniProtKB-UniRule"/>
</dbReference>
<dbReference type="GO" id="GO:0030170">
    <property type="term" value="F:pyridoxal phosphate binding"/>
    <property type="evidence" value="ECO:0007669"/>
    <property type="project" value="UniProtKB-UniRule"/>
</dbReference>
<dbReference type="GO" id="GO:0019264">
    <property type="term" value="P:glycine biosynthetic process from serine"/>
    <property type="evidence" value="ECO:0007669"/>
    <property type="project" value="UniProtKB-UniRule"/>
</dbReference>
<dbReference type="GO" id="GO:0035999">
    <property type="term" value="P:tetrahydrofolate interconversion"/>
    <property type="evidence" value="ECO:0007669"/>
    <property type="project" value="UniProtKB-UniRule"/>
</dbReference>
<dbReference type="CDD" id="cd00378">
    <property type="entry name" value="SHMT"/>
    <property type="match status" value="1"/>
</dbReference>
<dbReference type="FunFam" id="3.40.640.10:FF:000001">
    <property type="entry name" value="Serine hydroxymethyltransferase"/>
    <property type="match status" value="1"/>
</dbReference>
<dbReference type="FunFam" id="3.90.1150.10:FF:000003">
    <property type="entry name" value="Serine hydroxymethyltransferase"/>
    <property type="match status" value="1"/>
</dbReference>
<dbReference type="Gene3D" id="3.90.1150.10">
    <property type="entry name" value="Aspartate Aminotransferase, domain 1"/>
    <property type="match status" value="1"/>
</dbReference>
<dbReference type="Gene3D" id="3.40.640.10">
    <property type="entry name" value="Type I PLP-dependent aspartate aminotransferase-like (Major domain)"/>
    <property type="match status" value="1"/>
</dbReference>
<dbReference type="HAMAP" id="MF_00051">
    <property type="entry name" value="SHMT"/>
    <property type="match status" value="1"/>
</dbReference>
<dbReference type="InterPro" id="IPR015424">
    <property type="entry name" value="PyrdxlP-dep_Trfase"/>
</dbReference>
<dbReference type="InterPro" id="IPR015421">
    <property type="entry name" value="PyrdxlP-dep_Trfase_major"/>
</dbReference>
<dbReference type="InterPro" id="IPR015422">
    <property type="entry name" value="PyrdxlP-dep_Trfase_small"/>
</dbReference>
<dbReference type="InterPro" id="IPR001085">
    <property type="entry name" value="Ser_HO-MeTrfase"/>
</dbReference>
<dbReference type="InterPro" id="IPR049943">
    <property type="entry name" value="Ser_HO-MeTrfase-like"/>
</dbReference>
<dbReference type="InterPro" id="IPR019798">
    <property type="entry name" value="Ser_HO-MeTrfase_PLP_BS"/>
</dbReference>
<dbReference type="InterPro" id="IPR039429">
    <property type="entry name" value="SHMT-like_dom"/>
</dbReference>
<dbReference type="NCBIfam" id="NF000586">
    <property type="entry name" value="PRK00011.1"/>
    <property type="match status" value="1"/>
</dbReference>
<dbReference type="PANTHER" id="PTHR11680">
    <property type="entry name" value="SERINE HYDROXYMETHYLTRANSFERASE"/>
    <property type="match status" value="1"/>
</dbReference>
<dbReference type="PANTHER" id="PTHR11680:SF50">
    <property type="entry name" value="SERINE HYDROXYMETHYLTRANSFERASE"/>
    <property type="match status" value="1"/>
</dbReference>
<dbReference type="Pfam" id="PF00464">
    <property type="entry name" value="SHMT"/>
    <property type="match status" value="1"/>
</dbReference>
<dbReference type="PIRSF" id="PIRSF000412">
    <property type="entry name" value="SHMT"/>
    <property type="match status" value="1"/>
</dbReference>
<dbReference type="SUPFAM" id="SSF53383">
    <property type="entry name" value="PLP-dependent transferases"/>
    <property type="match status" value="1"/>
</dbReference>
<dbReference type="PROSITE" id="PS00096">
    <property type="entry name" value="SHMT"/>
    <property type="match status" value="1"/>
</dbReference>
<reference key="1">
    <citation type="journal article" date="2005" name="Proc. Natl. Acad. Sci. U.S.A.">
        <title>Complete genome sequence of Vibrio fischeri: a symbiotic bacterium with pathogenic congeners.</title>
        <authorList>
            <person name="Ruby E.G."/>
            <person name="Urbanowski M."/>
            <person name="Campbell J."/>
            <person name="Dunn A."/>
            <person name="Faini M."/>
            <person name="Gunsalus R."/>
            <person name="Lostroh P."/>
            <person name="Lupp C."/>
            <person name="McCann J."/>
            <person name="Millikan D."/>
            <person name="Schaefer A."/>
            <person name="Stabb E."/>
            <person name="Stevens A."/>
            <person name="Visick K."/>
            <person name="Whistler C."/>
            <person name="Greenberg E.P."/>
        </authorList>
    </citation>
    <scope>NUCLEOTIDE SEQUENCE [LARGE SCALE GENOMIC DNA]</scope>
    <source>
        <strain>ATCC 700601 / ES114</strain>
    </source>
</reference>
<name>GLYA_ALIF1</name>
<gene>
    <name evidence="1" type="primary">glyA</name>
    <name type="ordered locus">VF_0695</name>
</gene>
<feature type="chain" id="PRO_0000235047" description="Serine hydroxymethyltransferase">
    <location>
        <begin position="1"/>
        <end position="416"/>
    </location>
</feature>
<feature type="binding site" evidence="1">
    <location>
        <position position="121"/>
    </location>
    <ligand>
        <name>(6S)-5,6,7,8-tetrahydrofolate</name>
        <dbReference type="ChEBI" id="CHEBI:57453"/>
    </ligand>
</feature>
<feature type="binding site" evidence="1">
    <location>
        <begin position="125"/>
        <end position="127"/>
    </location>
    <ligand>
        <name>(6S)-5,6,7,8-tetrahydrofolate</name>
        <dbReference type="ChEBI" id="CHEBI:57453"/>
    </ligand>
</feature>
<feature type="binding site" evidence="1">
    <location>
        <position position="245"/>
    </location>
    <ligand>
        <name>(6S)-5,6,7,8-tetrahydrofolate</name>
        <dbReference type="ChEBI" id="CHEBI:57453"/>
    </ligand>
</feature>
<feature type="binding site" evidence="1">
    <location>
        <begin position="354"/>
        <end position="356"/>
    </location>
    <ligand>
        <name>(6S)-5,6,7,8-tetrahydrofolate</name>
        <dbReference type="ChEBI" id="CHEBI:57453"/>
    </ligand>
</feature>
<feature type="site" description="Plays an important role in substrate specificity" evidence="1">
    <location>
        <position position="228"/>
    </location>
</feature>
<feature type="modified residue" description="N6-(pyridoxal phosphate)lysine" evidence="1">
    <location>
        <position position="229"/>
    </location>
</feature>
<comment type="function">
    <text evidence="1">Catalyzes the reversible interconversion of serine and glycine with tetrahydrofolate (THF) serving as the one-carbon carrier. This reaction serves as the major source of one-carbon groups required for the biosynthesis of purines, thymidylate, methionine, and other important biomolecules. Also exhibits THF-independent aldolase activity toward beta-hydroxyamino acids, producing glycine and aldehydes, via a retro-aldol mechanism.</text>
</comment>
<comment type="catalytic activity">
    <reaction evidence="1">
        <text>(6R)-5,10-methylene-5,6,7,8-tetrahydrofolate + glycine + H2O = (6S)-5,6,7,8-tetrahydrofolate + L-serine</text>
        <dbReference type="Rhea" id="RHEA:15481"/>
        <dbReference type="ChEBI" id="CHEBI:15377"/>
        <dbReference type="ChEBI" id="CHEBI:15636"/>
        <dbReference type="ChEBI" id="CHEBI:33384"/>
        <dbReference type="ChEBI" id="CHEBI:57305"/>
        <dbReference type="ChEBI" id="CHEBI:57453"/>
        <dbReference type="EC" id="2.1.2.1"/>
    </reaction>
</comment>
<comment type="cofactor">
    <cofactor evidence="1">
        <name>pyridoxal 5'-phosphate</name>
        <dbReference type="ChEBI" id="CHEBI:597326"/>
    </cofactor>
</comment>
<comment type="pathway">
    <text evidence="1">One-carbon metabolism; tetrahydrofolate interconversion.</text>
</comment>
<comment type="pathway">
    <text evidence="1">Amino-acid biosynthesis; glycine biosynthesis; glycine from L-serine: step 1/1.</text>
</comment>
<comment type="subunit">
    <text evidence="1">Homodimer.</text>
</comment>
<comment type="subcellular location">
    <subcellularLocation>
        <location evidence="1">Cytoplasm</location>
    </subcellularLocation>
</comment>
<comment type="similarity">
    <text evidence="1">Belongs to the SHMT family.</text>
</comment>
<proteinExistence type="inferred from homology"/>
<keyword id="KW-0028">Amino-acid biosynthesis</keyword>
<keyword id="KW-0963">Cytoplasm</keyword>
<keyword id="KW-0554">One-carbon metabolism</keyword>
<keyword id="KW-0663">Pyridoxal phosphate</keyword>
<keyword id="KW-1185">Reference proteome</keyword>
<keyword id="KW-0808">Transferase</keyword>
<accession>Q5E706</accession>
<protein>
    <recommendedName>
        <fullName evidence="1">Serine hydroxymethyltransferase</fullName>
        <shortName evidence="1">SHMT</shortName>
        <shortName evidence="1">Serine methylase</shortName>
        <ecNumber evidence="1">2.1.2.1</ecNumber>
    </recommendedName>
</protein>